<feature type="chain" id="PRO_0000189987" description="Dedicator of cytokinesis protein 2">
    <location>
        <begin position="1"/>
        <end position="1828"/>
    </location>
</feature>
<feature type="domain" description="SH3" evidence="3">
    <location>
        <begin position="8"/>
        <end position="69"/>
    </location>
</feature>
<feature type="domain" description="C2 DOCK-type" evidence="4">
    <location>
        <begin position="423"/>
        <end position="607"/>
    </location>
</feature>
<feature type="domain" description="DOCKER" evidence="5">
    <location>
        <begin position="1210"/>
        <end position="1621"/>
    </location>
</feature>
<feature type="region of interest" description="Disordered" evidence="6">
    <location>
        <begin position="1652"/>
        <end position="1703"/>
    </location>
</feature>
<feature type="modified residue" description="N6-acetyllysine" evidence="2">
    <location>
        <position position="304"/>
    </location>
</feature>
<feature type="modified residue" description="Phosphoserine" evidence="9">
    <location>
        <position position="588"/>
    </location>
</feature>
<feature type="modified residue" description="Phosphoserine" evidence="2">
    <location>
        <position position="593"/>
    </location>
</feature>
<feature type="modified residue" description="N6-acetyllysine" evidence="2">
    <location>
        <position position="738"/>
    </location>
</feature>
<feature type="modified residue" description="Phosphoserine" evidence="2">
    <location>
        <position position="1683"/>
    </location>
</feature>
<feature type="modified residue" description="Phosphoserine" evidence="9">
    <location>
        <position position="1704"/>
    </location>
</feature>
<feature type="modified residue" description="Phosphoserine" evidence="9">
    <location>
        <position position="1729"/>
    </location>
</feature>
<feature type="modified residue" description="Phosphoserine" evidence="2">
    <location>
        <position position="1782"/>
    </location>
</feature>
<feature type="sequence conflict" description="In Ref. 1; AAK13045." evidence="8" ref="1">
    <original>V</original>
    <variation>E</variation>
    <location>
        <position position="936"/>
    </location>
</feature>
<feature type="sequence conflict" description="In Ref. 2; BAC39514." evidence="8" ref="2">
    <original>S</original>
    <variation>F</variation>
    <location>
        <position position="1722"/>
    </location>
</feature>
<sequence length="1828" mass="211704">MAPWRKTDKERHGVAIYNFQGSEAQHLTLQIGDVVRIQETCGDWYRGYLIKHKLSQGIFPTSFIHLKEVTVEKRRNIENIIPAEIPLAQEVTTTLWEWGSIWKQLYVASKKERFLQVQSMMYDLMEWRSQLLSGTLPKDELKELKQKVTSKIDYGNKILELDLIVRDEDGNILDPDKTSVISLFHAHEEATYKITERIKEEMSKDQPDYGVYSRISSSPTHSLYVFVRNFVCRIGEDAELFMSLYDPHKQTVISENYLVRWGSKGFPKEIEMLNNLKVVFTDLGNKDLNRDKIFLICQIVRIGKMDLKDINAKKCTQGLRRPFGVAVMDITDIIKGKAESDEEKQHFIPFHPVSAENDFLHSLLGKVIASKGDSGGQGLWVTMKMLVGDIIQIRKDYPHLVDRTTVVARKLGFPEIIMPGDVRNDIYITLLQGDFDKYTKTTQRNVEVIMCVCTEDGKVLPNAICVGAGDKAMNEYHSVVYYQVKQPRWMETVKVAVPIEDMQRIHLRFMFRHRSSLESKDKGEKNFAMSYVKLMKEDGTTLHDGYHELVVLKGDSKKMEDASAYLTLPSYRHPVENKGATLSRSSSSVGGLSVSSRDVFSISTLVCSTKLTQNVGLLGLLKWRMKPQLLQENLEKLKIVDGEEVVKFLQDTLDALFNIMMEHSQSNEYDILVFDALIYIIGLIADRKFQHFNTVLEAYIQQHFSATLAYKKLMTVLKTYLDTSSRGEQCEPILRTLKALEYVFKFIVRSRTLFSQLYEGKEQMEFEESMRRLFESINNLMKSQYKTTILLQVAALKYIPSVLHDVETVFDAKLLSQLLYEFYTCIPPVKLQKQKVQSMNEIVQSNLFKKQECRDILLPVITKELKELLEQRDDGQHQAEKKHCVELLNSILEVLSCQDAAFTYDHIQEIMVQLLRTVNRTVITMGRDHALISHFVACMTAILDQMGDQHYSFYIETFQTSSDLVDFLMETFIMFKDLIGKNVYPGDWMAMSMVQNRVFLRAINKFAETMNQKFLEHTSFEFQLWNNYFHLAVAFITQDSLQLEQFTHAKYNKILNKYGDMRRLIGFSIRDMWYKLGQNKICFIPGMVGPILEMTLIPEAELRKATIPIFFDMMLCEYQRTGAFKKFENEIILKLDHEVEGGRGDEQYMQLLESILMECTAEHPTIAKSVENFVSLVKGLLEKLLDYRGVMTDESKDNRMSCTVNLLNFYKDNNREEMYIRYLYKLRDLHLDCENYTEAAYTLLLHTWLLKWSDEQCASQVMQTGQQHPQTHRQLKETLYETIIGYFDKGKMWEEAISLCKELAEQYEMEIFDYELLSQNLTQQAKFYENIMKILRTKPDYFAVGYYGQGFPSFLRNKVFIYRGKEYERREDFQMQLLSQFPNAEKMNTTSAPGDDVRNAPGQYIQCFTVQPVLDEHPRFKNKPVPDQIINFYKSNYVQKFHYSRPVRRGKVDPENEFASMWIERTSFLTAYKLPGILRWFEVVHMSQTTISPLENAIETMSTVNEKILMMINQYQSDESLPINPLSMLLNGIVDPAVMGGFAKYEKAFFTEEYSREHPEDQDKLSHLKDLIAWQIPFLGAGIKIHEKRVSDNLRPFHDRMEECFKNLKMKVEKEYGVREMPDFEDRRVGRPRSMLRSYRQMSVISLASMHSDCSTPSKVPAESFDLESAPPKTPKVEEEPISPGSTLPEVKLRRSKKRTKRSSVVFADEKAATESDLKRLSRKQEFMSDTNLSEHAAIPARVSILSQMSFASQSMPTIPALTLSVAGVPGLDEANTSPRLSQTFFQVSDGDKKTLKKKKVNQFFKTMLASKSSEESKQIPDFLSTNM</sequence>
<accession>Q8C3J5</accession>
<accession>Q5SRI4</accession>
<accession>Q99M79</accession>
<reference key="1">
    <citation type="journal article" date="2001" name="Nature">
        <title>Haematopoietic cell-specific CDM family protein DOCK2 is essential for lymphocyte migration.</title>
        <authorList>
            <person name="Fukui Y."/>
            <person name="Hashimoto O."/>
            <person name="Sanui T."/>
            <person name="Oono T."/>
            <person name="Koga H."/>
            <person name="Abe M."/>
            <person name="Inayoshi A."/>
            <person name="Noda M."/>
            <person name="Oike M."/>
            <person name="Shirai T."/>
            <person name="Sasazuki T."/>
        </authorList>
    </citation>
    <scope>NUCLEOTIDE SEQUENCE [MRNA]</scope>
    <scope>FUNCTION</scope>
    <scope>TISSUE SPECIFICITY</scope>
    <source>
        <strain>C57BL/6J</strain>
        <tissue>Thymus</tissue>
    </source>
</reference>
<reference key="2">
    <citation type="journal article" date="2005" name="Science">
        <title>The transcriptional landscape of the mammalian genome.</title>
        <authorList>
            <person name="Carninci P."/>
            <person name="Kasukawa T."/>
            <person name="Katayama S."/>
            <person name="Gough J."/>
            <person name="Frith M.C."/>
            <person name="Maeda N."/>
            <person name="Oyama R."/>
            <person name="Ravasi T."/>
            <person name="Lenhard B."/>
            <person name="Wells C."/>
            <person name="Kodzius R."/>
            <person name="Shimokawa K."/>
            <person name="Bajic V.B."/>
            <person name="Brenner S.E."/>
            <person name="Batalov S."/>
            <person name="Forrest A.R."/>
            <person name="Zavolan M."/>
            <person name="Davis M.J."/>
            <person name="Wilming L.G."/>
            <person name="Aidinis V."/>
            <person name="Allen J.E."/>
            <person name="Ambesi-Impiombato A."/>
            <person name="Apweiler R."/>
            <person name="Aturaliya R.N."/>
            <person name="Bailey T.L."/>
            <person name="Bansal M."/>
            <person name="Baxter L."/>
            <person name="Beisel K.W."/>
            <person name="Bersano T."/>
            <person name="Bono H."/>
            <person name="Chalk A.M."/>
            <person name="Chiu K.P."/>
            <person name="Choudhary V."/>
            <person name="Christoffels A."/>
            <person name="Clutterbuck D.R."/>
            <person name="Crowe M.L."/>
            <person name="Dalla E."/>
            <person name="Dalrymple B.P."/>
            <person name="de Bono B."/>
            <person name="Della Gatta G."/>
            <person name="di Bernardo D."/>
            <person name="Down T."/>
            <person name="Engstrom P."/>
            <person name="Fagiolini M."/>
            <person name="Faulkner G."/>
            <person name="Fletcher C.F."/>
            <person name="Fukushima T."/>
            <person name="Furuno M."/>
            <person name="Futaki S."/>
            <person name="Gariboldi M."/>
            <person name="Georgii-Hemming P."/>
            <person name="Gingeras T.R."/>
            <person name="Gojobori T."/>
            <person name="Green R.E."/>
            <person name="Gustincich S."/>
            <person name="Harbers M."/>
            <person name="Hayashi Y."/>
            <person name="Hensch T.K."/>
            <person name="Hirokawa N."/>
            <person name="Hill D."/>
            <person name="Huminiecki L."/>
            <person name="Iacono M."/>
            <person name="Ikeo K."/>
            <person name="Iwama A."/>
            <person name="Ishikawa T."/>
            <person name="Jakt M."/>
            <person name="Kanapin A."/>
            <person name="Katoh M."/>
            <person name="Kawasawa Y."/>
            <person name="Kelso J."/>
            <person name="Kitamura H."/>
            <person name="Kitano H."/>
            <person name="Kollias G."/>
            <person name="Krishnan S.P."/>
            <person name="Kruger A."/>
            <person name="Kummerfeld S.K."/>
            <person name="Kurochkin I.V."/>
            <person name="Lareau L.F."/>
            <person name="Lazarevic D."/>
            <person name="Lipovich L."/>
            <person name="Liu J."/>
            <person name="Liuni S."/>
            <person name="McWilliam S."/>
            <person name="Madan Babu M."/>
            <person name="Madera M."/>
            <person name="Marchionni L."/>
            <person name="Matsuda H."/>
            <person name="Matsuzawa S."/>
            <person name="Miki H."/>
            <person name="Mignone F."/>
            <person name="Miyake S."/>
            <person name="Morris K."/>
            <person name="Mottagui-Tabar S."/>
            <person name="Mulder N."/>
            <person name="Nakano N."/>
            <person name="Nakauchi H."/>
            <person name="Ng P."/>
            <person name="Nilsson R."/>
            <person name="Nishiguchi S."/>
            <person name="Nishikawa S."/>
            <person name="Nori F."/>
            <person name="Ohara O."/>
            <person name="Okazaki Y."/>
            <person name="Orlando V."/>
            <person name="Pang K.C."/>
            <person name="Pavan W.J."/>
            <person name="Pavesi G."/>
            <person name="Pesole G."/>
            <person name="Petrovsky N."/>
            <person name="Piazza S."/>
            <person name="Reed J."/>
            <person name="Reid J.F."/>
            <person name="Ring B.Z."/>
            <person name="Ringwald M."/>
            <person name="Rost B."/>
            <person name="Ruan Y."/>
            <person name="Salzberg S.L."/>
            <person name="Sandelin A."/>
            <person name="Schneider C."/>
            <person name="Schoenbach C."/>
            <person name="Sekiguchi K."/>
            <person name="Semple C.A."/>
            <person name="Seno S."/>
            <person name="Sessa L."/>
            <person name="Sheng Y."/>
            <person name="Shibata Y."/>
            <person name="Shimada H."/>
            <person name="Shimada K."/>
            <person name="Silva D."/>
            <person name="Sinclair B."/>
            <person name="Sperling S."/>
            <person name="Stupka E."/>
            <person name="Sugiura K."/>
            <person name="Sultana R."/>
            <person name="Takenaka Y."/>
            <person name="Taki K."/>
            <person name="Tammoja K."/>
            <person name="Tan S.L."/>
            <person name="Tang S."/>
            <person name="Taylor M.S."/>
            <person name="Tegner J."/>
            <person name="Teichmann S.A."/>
            <person name="Ueda H.R."/>
            <person name="van Nimwegen E."/>
            <person name="Verardo R."/>
            <person name="Wei C.L."/>
            <person name="Yagi K."/>
            <person name="Yamanishi H."/>
            <person name="Zabarovsky E."/>
            <person name="Zhu S."/>
            <person name="Zimmer A."/>
            <person name="Hide W."/>
            <person name="Bult C."/>
            <person name="Grimmond S.M."/>
            <person name="Teasdale R.D."/>
            <person name="Liu E.T."/>
            <person name="Brusic V."/>
            <person name="Quackenbush J."/>
            <person name="Wahlestedt C."/>
            <person name="Mattick J.S."/>
            <person name="Hume D.A."/>
            <person name="Kai C."/>
            <person name="Sasaki D."/>
            <person name="Tomaru Y."/>
            <person name="Fukuda S."/>
            <person name="Kanamori-Katayama M."/>
            <person name="Suzuki M."/>
            <person name="Aoki J."/>
            <person name="Arakawa T."/>
            <person name="Iida J."/>
            <person name="Imamura K."/>
            <person name="Itoh M."/>
            <person name="Kato T."/>
            <person name="Kawaji H."/>
            <person name="Kawagashira N."/>
            <person name="Kawashima T."/>
            <person name="Kojima M."/>
            <person name="Kondo S."/>
            <person name="Konno H."/>
            <person name="Nakano K."/>
            <person name="Ninomiya N."/>
            <person name="Nishio T."/>
            <person name="Okada M."/>
            <person name="Plessy C."/>
            <person name="Shibata K."/>
            <person name="Shiraki T."/>
            <person name="Suzuki S."/>
            <person name="Tagami M."/>
            <person name="Waki K."/>
            <person name="Watahiki A."/>
            <person name="Okamura-Oho Y."/>
            <person name="Suzuki H."/>
            <person name="Kawai J."/>
            <person name="Hayashizaki Y."/>
        </authorList>
    </citation>
    <scope>NUCLEOTIDE SEQUENCE [LARGE SCALE MRNA] OF 1501-1828</scope>
    <source>
        <strain>C57BL/6J</strain>
        <tissue>Mammary gland</tissue>
    </source>
</reference>
<reference key="3">
    <citation type="journal article" date="2009" name="PLoS Biol.">
        <title>Lineage-specific biology revealed by a finished genome assembly of the mouse.</title>
        <authorList>
            <person name="Church D.M."/>
            <person name="Goodstadt L."/>
            <person name="Hillier L.W."/>
            <person name="Zody M.C."/>
            <person name="Goldstein S."/>
            <person name="She X."/>
            <person name="Bult C.J."/>
            <person name="Agarwala R."/>
            <person name="Cherry J.L."/>
            <person name="DiCuccio M."/>
            <person name="Hlavina W."/>
            <person name="Kapustin Y."/>
            <person name="Meric P."/>
            <person name="Maglott D."/>
            <person name="Birtle Z."/>
            <person name="Marques A.C."/>
            <person name="Graves T."/>
            <person name="Zhou S."/>
            <person name="Teague B."/>
            <person name="Potamousis K."/>
            <person name="Churas C."/>
            <person name="Place M."/>
            <person name="Herschleb J."/>
            <person name="Runnheim R."/>
            <person name="Forrest D."/>
            <person name="Amos-Landgraf J."/>
            <person name="Schwartz D.C."/>
            <person name="Cheng Z."/>
            <person name="Lindblad-Toh K."/>
            <person name="Eichler E.E."/>
            <person name="Ponting C.P."/>
        </authorList>
    </citation>
    <scope>NUCLEOTIDE SEQUENCE [LARGE SCALE GENOMIC DNA]</scope>
    <source>
        <strain>C57BL/6J</strain>
    </source>
</reference>
<reference key="4">
    <citation type="journal article" date="2009" name="Immunity">
        <title>The phagosomal proteome in interferon-gamma-activated macrophages.</title>
        <authorList>
            <person name="Trost M."/>
            <person name="English L."/>
            <person name="Lemieux S."/>
            <person name="Courcelles M."/>
            <person name="Desjardins M."/>
            <person name="Thibault P."/>
        </authorList>
    </citation>
    <scope>IDENTIFICATION BY MASS SPECTROMETRY [LARGE SCALE ANALYSIS]</scope>
</reference>
<reference key="5">
    <citation type="journal article" date="2010" name="Cell">
        <title>A tissue-specific atlas of mouse protein phosphorylation and expression.</title>
        <authorList>
            <person name="Huttlin E.L."/>
            <person name="Jedrychowski M.P."/>
            <person name="Elias J.E."/>
            <person name="Goswami T."/>
            <person name="Rad R."/>
            <person name="Beausoleil S.A."/>
            <person name="Villen J."/>
            <person name="Haas W."/>
            <person name="Sowa M.E."/>
            <person name="Gygi S.P."/>
        </authorList>
    </citation>
    <scope>PHOSPHORYLATION [LARGE SCALE ANALYSIS] AT SER-588; SER-1704 AND SER-1729</scope>
    <scope>IDENTIFICATION BY MASS SPECTROMETRY [LARGE SCALE ANALYSIS]</scope>
    <source>
        <tissue>Brain</tissue>
        <tissue>Lung</tissue>
        <tissue>Spleen</tissue>
        <tissue>Testis</tissue>
    </source>
</reference>
<protein>
    <recommendedName>
        <fullName>Dedicator of cytokinesis protein 2</fullName>
    </recommendedName>
    <alternativeName>
        <fullName>Protein Hch</fullName>
    </alternativeName>
</protein>
<organism>
    <name type="scientific">Mus musculus</name>
    <name type="common">Mouse</name>
    <dbReference type="NCBI Taxonomy" id="10090"/>
    <lineage>
        <taxon>Eukaryota</taxon>
        <taxon>Metazoa</taxon>
        <taxon>Chordata</taxon>
        <taxon>Craniata</taxon>
        <taxon>Vertebrata</taxon>
        <taxon>Euteleostomi</taxon>
        <taxon>Mammalia</taxon>
        <taxon>Eutheria</taxon>
        <taxon>Euarchontoglires</taxon>
        <taxon>Glires</taxon>
        <taxon>Rodentia</taxon>
        <taxon>Myomorpha</taxon>
        <taxon>Muroidea</taxon>
        <taxon>Muridae</taxon>
        <taxon>Murinae</taxon>
        <taxon>Mus</taxon>
        <taxon>Mus</taxon>
    </lineage>
</organism>
<keyword id="KW-0007">Acetylation</keyword>
<keyword id="KW-0963">Cytoplasm</keyword>
<keyword id="KW-0206">Cytoskeleton</keyword>
<keyword id="KW-0344">Guanine-nucleotide releasing factor</keyword>
<keyword id="KW-0472">Membrane</keyword>
<keyword id="KW-0597">Phosphoprotein</keyword>
<keyword id="KW-1185">Reference proteome</keyword>
<keyword id="KW-0728">SH3 domain</keyword>
<name>DOCK2_MOUSE</name>
<comment type="function">
    <text evidence="7">Involved in cytoskeletal rearrangements required for lymphocyte migration in response of chemokines. Activates RAC1 and RAC2, but not CDC42, by functioning as a guanine nucleotide exchange factor (GEF), which exchanges bound GDP for free GTP. May also participate in IL2 transcriptional activation via the activation of RAC2.</text>
</comment>
<comment type="subunit">
    <text evidence="1 8">Homodimer (Probable). Interacts with RAC1 and RAC2. Interacts with CRKL and VAV. Interacts with CD3Z (By similarity).</text>
</comment>
<comment type="subcellular location">
    <subcellularLocation>
        <location evidence="1">Endomembrane system</location>
        <topology evidence="1">Peripheral membrane protein</topology>
    </subcellularLocation>
    <subcellularLocation>
        <location evidence="1">Cytoplasm</location>
        <location evidence="1">Cytoskeleton</location>
    </subcellularLocation>
    <text evidence="1">Colocalizes with F-actin.</text>
</comment>
<comment type="tissue specificity">
    <text evidence="7">Specifically expressed in hematopoietic cells.</text>
</comment>
<comment type="domain">
    <text evidence="1">The DOCKER domain probably mediates the GEF activity.</text>
</comment>
<comment type="similarity">
    <text evidence="4">Belongs to the DOCK family.</text>
</comment>
<dbReference type="EMBL" id="AY027438">
    <property type="protein sequence ID" value="AAK13045.1"/>
    <property type="molecule type" value="mRNA"/>
</dbReference>
<dbReference type="EMBL" id="AK085708">
    <property type="protein sequence ID" value="BAC39514.2"/>
    <property type="molecule type" value="mRNA"/>
</dbReference>
<dbReference type="EMBL" id="AL669849">
    <property type="status" value="NOT_ANNOTATED_CDS"/>
    <property type="molecule type" value="Genomic_DNA"/>
</dbReference>
<dbReference type="EMBL" id="AL671971">
    <property type="status" value="NOT_ANNOTATED_CDS"/>
    <property type="molecule type" value="Genomic_DNA"/>
</dbReference>
<dbReference type="EMBL" id="CR392356">
    <property type="status" value="NOT_ANNOTATED_CDS"/>
    <property type="molecule type" value="Genomic_DNA"/>
</dbReference>
<dbReference type="EMBL" id="CR762384">
    <property type="status" value="NOT_ANNOTATED_CDS"/>
    <property type="molecule type" value="Genomic_DNA"/>
</dbReference>
<dbReference type="CCDS" id="CCDS83791.1"/>
<dbReference type="RefSeq" id="NP_203538.2">
    <property type="nucleotide sequence ID" value="NM_033374.3"/>
</dbReference>
<dbReference type="SMR" id="Q8C3J5"/>
<dbReference type="BioGRID" id="220457">
    <property type="interactions" value="3"/>
</dbReference>
<dbReference type="FunCoup" id="Q8C3J5">
    <property type="interactions" value="914"/>
</dbReference>
<dbReference type="IntAct" id="Q8C3J5">
    <property type="interactions" value="5"/>
</dbReference>
<dbReference type="STRING" id="10090.ENSMUSP00000090884"/>
<dbReference type="GlyGen" id="Q8C3J5">
    <property type="glycosylation" value="2 sites, 1 O-linked glycan (1 site)"/>
</dbReference>
<dbReference type="iPTMnet" id="Q8C3J5"/>
<dbReference type="MetOSite" id="Q8C3J5"/>
<dbReference type="PhosphoSitePlus" id="Q8C3J5"/>
<dbReference type="jPOST" id="Q8C3J5"/>
<dbReference type="PaxDb" id="10090-ENSMUSP00000090884"/>
<dbReference type="PeptideAtlas" id="Q8C3J5"/>
<dbReference type="ProteomicsDB" id="279754"/>
<dbReference type="Antibodypedia" id="28772">
    <property type="antibodies" value="250 antibodies from 32 providers"/>
</dbReference>
<dbReference type="DNASU" id="94176"/>
<dbReference type="Ensembl" id="ENSMUST00000093193.12">
    <property type="protein sequence ID" value="ENSMUSP00000090884.6"/>
    <property type="gene ID" value="ENSMUSG00000020143.16"/>
</dbReference>
<dbReference type="GeneID" id="94176"/>
<dbReference type="KEGG" id="mmu:94176"/>
<dbReference type="UCSC" id="uc029rle.2">
    <property type="organism name" value="mouse"/>
</dbReference>
<dbReference type="AGR" id="MGI:2149010"/>
<dbReference type="CTD" id="1794"/>
<dbReference type="MGI" id="MGI:2149010">
    <property type="gene designation" value="Dock2"/>
</dbReference>
<dbReference type="VEuPathDB" id="HostDB:ENSMUSG00000020143"/>
<dbReference type="eggNOG" id="KOG1998">
    <property type="taxonomic scope" value="Eukaryota"/>
</dbReference>
<dbReference type="GeneTree" id="ENSGT00940000154903"/>
<dbReference type="HOGENOM" id="CLU_000595_2_1_1"/>
<dbReference type="InParanoid" id="Q8C3J5"/>
<dbReference type="OMA" id="VECAEHH"/>
<dbReference type="OrthoDB" id="18896at2759"/>
<dbReference type="PhylomeDB" id="Q8C3J5"/>
<dbReference type="TreeFam" id="TF300423"/>
<dbReference type="Reactome" id="R-MMU-6798695">
    <property type="pathway name" value="Neutrophil degranulation"/>
</dbReference>
<dbReference type="Reactome" id="R-MMU-8980692">
    <property type="pathway name" value="RHOA GTPase cycle"/>
</dbReference>
<dbReference type="Reactome" id="R-MMU-9013149">
    <property type="pathway name" value="RAC1 GTPase cycle"/>
</dbReference>
<dbReference type="Reactome" id="R-MMU-9013404">
    <property type="pathway name" value="RAC2 GTPase cycle"/>
</dbReference>
<dbReference type="Reactome" id="R-MMU-9013408">
    <property type="pathway name" value="RHOG GTPase cycle"/>
</dbReference>
<dbReference type="Reactome" id="R-MMU-983231">
    <property type="pathway name" value="Factors involved in megakaryocyte development and platelet production"/>
</dbReference>
<dbReference type="BioGRID-ORCS" id="94176">
    <property type="hits" value="4 hits in 56 CRISPR screens"/>
</dbReference>
<dbReference type="ChiTaRS" id="Dock2">
    <property type="organism name" value="mouse"/>
</dbReference>
<dbReference type="PRO" id="PR:Q8C3J5"/>
<dbReference type="Proteomes" id="UP000000589">
    <property type="component" value="Chromosome 11"/>
</dbReference>
<dbReference type="RNAct" id="Q8C3J5">
    <property type="molecule type" value="protein"/>
</dbReference>
<dbReference type="Bgee" id="ENSMUSG00000020143">
    <property type="expression patterns" value="Expressed in peripheral lymph node and 120 other cell types or tissues"/>
</dbReference>
<dbReference type="ExpressionAtlas" id="Q8C3J5">
    <property type="expression patterns" value="baseline and differential"/>
</dbReference>
<dbReference type="GO" id="GO:0005737">
    <property type="term" value="C:cytoplasm"/>
    <property type="evidence" value="ECO:0007669"/>
    <property type="project" value="UniProtKB-KW"/>
</dbReference>
<dbReference type="GO" id="GO:0005856">
    <property type="term" value="C:cytoskeleton"/>
    <property type="evidence" value="ECO:0007669"/>
    <property type="project" value="UniProtKB-SubCell"/>
</dbReference>
<dbReference type="GO" id="GO:0012505">
    <property type="term" value="C:endomembrane system"/>
    <property type="evidence" value="ECO:0007669"/>
    <property type="project" value="UniProtKB-SubCell"/>
</dbReference>
<dbReference type="GO" id="GO:0016020">
    <property type="term" value="C:membrane"/>
    <property type="evidence" value="ECO:0007669"/>
    <property type="project" value="UniProtKB-KW"/>
</dbReference>
<dbReference type="GO" id="GO:0005096">
    <property type="term" value="F:GTPase activator activity"/>
    <property type="evidence" value="ECO:0000315"/>
    <property type="project" value="MGI"/>
</dbReference>
<dbReference type="GO" id="GO:0005085">
    <property type="term" value="F:guanyl-nucleotide exchange factor activity"/>
    <property type="evidence" value="ECO:0000250"/>
    <property type="project" value="UniProtKB"/>
</dbReference>
<dbReference type="GO" id="GO:0042608">
    <property type="term" value="F:T cell receptor binding"/>
    <property type="evidence" value="ECO:0000250"/>
    <property type="project" value="UniProtKB"/>
</dbReference>
<dbReference type="GO" id="GO:0030036">
    <property type="term" value="P:actin cytoskeleton organization"/>
    <property type="evidence" value="ECO:0007669"/>
    <property type="project" value="InterPro"/>
</dbReference>
<dbReference type="GO" id="GO:0046631">
    <property type="term" value="P:alpha-beta T cell activation"/>
    <property type="evidence" value="ECO:0000315"/>
    <property type="project" value="MGI"/>
</dbReference>
<dbReference type="GO" id="GO:0046633">
    <property type="term" value="P:alpha-beta T cell proliferation"/>
    <property type="evidence" value="ECO:0000315"/>
    <property type="project" value="MGI"/>
</dbReference>
<dbReference type="GO" id="GO:0006935">
    <property type="term" value="P:chemotaxis"/>
    <property type="evidence" value="ECO:0000315"/>
    <property type="project" value="MGI"/>
</dbReference>
<dbReference type="GO" id="GO:0007010">
    <property type="term" value="P:cytoskeleton organization"/>
    <property type="evidence" value="ECO:0000314"/>
    <property type="project" value="MGI"/>
</dbReference>
<dbReference type="GO" id="GO:0001768">
    <property type="term" value="P:establishment of T cell polarity"/>
    <property type="evidence" value="ECO:0000315"/>
    <property type="project" value="MGI"/>
</dbReference>
<dbReference type="GO" id="GO:0001771">
    <property type="term" value="P:immunological synapse formation"/>
    <property type="evidence" value="ECO:0000315"/>
    <property type="project" value="MGI"/>
</dbReference>
<dbReference type="GO" id="GO:0044351">
    <property type="term" value="P:macropinocytosis"/>
    <property type="evidence" value="ECO:0000315"/>
    <property type="project" value="UniProtKB"/>
</dbReference>
<dbReference type="GO" id="GO:0001766">
    <property type="term" value="P:membrane raft polarization"/>
    <property type="evidence" value="ECO:0000315"/>
    <property type="project" value="MGI"/>
</dbReference>
<dbReference type="GO" id="GO:0002277">
    <property type="term" value="P:myeloid dendritic cell activation involved in immune response"/>
    <property type="evidence" value="ECO:0000315"/>
    <property type="project" value="UniProtKB"/>
</dbReference>
<dbReference type="GO" id="GO:0045060">
    <property type="term" value="P:negative thymic T cell selection"/>
    <property type="evidence" value="ECO:0000315"/>
    <property type="project" value="MGI"/>
</dbReference>
<dbReference type="GO" id="GO:0050766">
    <property type="term" value="P:positive regulation of phagocytosis"/>
    <property type="evidence" value="ECO:0000315"/>
    <property type="project" value="UniProtKB"/>
</dbReference>
<dbReference type="GO" id="GO:0035022">
    <property type="term" value="P:positive regulation of Rac protein signal transduction"/>
    <property type="evidence" value="ECO:0000305"/>
    <property type="project" value="MGI"/>
</dbReference>
<dbReference type="GO" id="GO:0045059">
    <property type="term" value="P:positive thymic T cell selection"/>
    <property type="evidence" value="ECO:0000315"/>
    <property type="project" value="MGI"/>
</dbReference>
<dbReference type="GO" id="GO:0007264">
    <property type="term" value="P:small GTPase-mediated signal transduction"/>
    <property type="evidence" value="ECO:0007669"/>
    <property type="project" value="InterPro"/>
</dbReference>
<dbReference type="GO" id="GO:0042110">
    <property type="term" value="P:T cell activation"/>
    <property type="evidence" value="ECO:0000315"/>
    <property type="project" value="MGI"/>
</dbReference>
<dbReference type="GO" id="GO:0042098">
    <property type="term" value="P:T cell proliferation"/>
    <property type="evidence" value="ECO:0000315"/>
    <property type="project" value="MGI"/>
</dbReference>
<dbReference type="CDD" id="cd11706">
    <property type="entry name" value="DHR2_DOCK2"/>
    <property type="match status" value="1"/>
</dbReference>
<dbReference type="FunFam" id="1.20.58.740:FF:000004">
    <property type="entry name" value="Dedicator of cytokinesis protein 1"/>
    <property type="match status" value="1"/>
</dbReference>
<dbReference type="FunFam" id="1.25.40.410:FF:000004">
    <property type="entry name" value="Dedicator of cytokinesis protein 1"/>
    <property type="match status" value="1"/>
</dbReference>
<dbReference type="FunFam" id="2.60.40.150:FF:000044">
    <property type="entry name" value="dedicator of cytokinesis protein 1"/>
    <property type="match status" value="1"/>
</dbReference>
<dbReference type="FunFam" id="2.30.30.40:FF:000057">
    <property type="entry name" value="Dedicator of cytokinesis protein 4"/>
    <property type="match status" value="1"/>
</dbReference>
<dbReference type="FunFam" id="1.20.1270.350:FF:000001">
    <property type="entry name" value="dedicator of cytokinesis protein 4"/>
    <property type="match status" value="1"/>
</dbReference>
<dbReference type="Gene3D" id="1.20.58.740">
    <property type="match status" value="1"/>
</dbReference>
<dbReference type="Gene3D" id="1.25.40.410">
    <property type="match status" value="1"/>
</dbReference>
<dbReference type="Gene3D" id="2.60.40.150">
    <property type="entry name" value="C2 domain"/>
    <property type="match status" value="1"/>
</dbReference>
<dbReference type="Gene3D" id="1.20.1270.350">
    <property type="entry name" value="Dedicator of cytokinesis N-terminal subdomain"/>
    <property type="match status" value="1"/>
</dbReference>
<dbReference type="Gene3D" id="2.30.30.40">
    <property type="entry name" value="SH3 Domains"/>
    <property type="match status" value="1"/>
</dbReference>
<dbReference type="InterPro" id="IPR016024">
    <property type="entry name" value="ARM-type_fold"/>
</dbReference>
<dbReference type="InterPro" id="IPR027007">
    <property type="entry name" value="C2_DOCK-type_domain"/>
</dbReference>
<dbReference type="InterPro" id="IPR035892">
    <property type="entry name" value="C2_domain_sf"/>
</dbReference>
<dbReference type="InterPro" id="IPR026799">
    <property type="entry name" value="DHR2_DOCK2"/>
</dbReference>
<dbReference type="InterPro" id="IPR026791">
    <property type="entry name" value="DOCK"/>
</dbReference>
<dbReference type="InterPro" id="IPR043161">
    <property type="entry name" value="DOCK_C_lobe_A"/>
</dbReference>
<dbReference type="InterPro" id="IPR043162">
    <property type="entry name" value="DOCK_C_lobe_C"/>
</dbReference>
<dbReference type="InterPro" id="IPR032376">
    <property type="entry name" value="DOCK_N"/>
</dbReference>
<dbReference type="InterPro" id="IPR042455">
    <property type="entry name" value="DOCK_N_sub1"/>
</dbReference>
<dbReference type="InterPro" id="IPR027357">
    <property type="entry name" value="DOCKER_dom"/>
</dbReference>
<dbReference type="InterPro" id="IPR046769">
    <property type="entry name" value="DOCKER_Lobe_A"/>
</dbReference>
<dbReference type="InterPro" id="IPR046770">
    <property type="entry name" value="DOCKER_Lobe_B"/>
</dbReference>
<dbReference type="InterPro" id="IPR046773">
    <property type="entry name" value="DOCKER_Lobe_C"/>
</dbReference>
<dbReference type="InterPro" id="IPR036028">
    <property type="entry name" value="SH3-like_dom_sf"/>
</dbReference>
<dbReference type="InterPro" id="IPR001452">
    <property type="entry name" value="SH3_domain"/>
</dbReference>
<dbReference type="InterPro" id="IPR056372">
    <property type="entry name" value="TPR_DOCK"/>
</dbReference>
<dbReference type="PANTHER" id="PTHR45653">
    <property type="entry name" value="DEDICATOR OF CYTOKINESIS"/>
    <property type="match status" value="1"/>
</dbReference>
<dbReference type="PANTHER" id="PTHR45653:SF6">
    <property type="entry name" value="DEDICATOR OF CYTOKINESIS PROTEIN 2"/>
    <property type="match status" value="1"/>
</dbReference>
<dbReference type="Pfam" id="PF06920">
    <property type="entry name" value="DHR-2_Lobe_A"/>
    <property type="match status" value="1"/>
</dbReference>
<dbReference type="Pfam" id="PF20422">
    <property type="entry name" value="DHR-2_Lobe_B"/>
    <property type="match status" value="1"/>
</dbReference>
<dbReference type="Pfam" id="PF20421">
    <property type="entry name" value="DHR-2_Lobe_C"/>
    <property type="match status" value="1"/>
</dbReference>
<dbReference type="Pfam" id="PF14429">
    <property type="entry name" value="DOCK-C2"/>
    <property type="match status" value="1"/>
</dbReference>
<dbReference type="Pfam" id="PF16172">
    <property type="entry name" value="DOCK_N"/>
    <property type="match status" value="1"/>
</dbReference>
<dbReference type="Pfam" id="PF00018">
    <property type="entry name" value="SH3_1"/>
    <property type="match status" value="1"/>
</dbReference>
<dbReference type="Pfam" id="PF23554">
    <property type="entry name" value="TPR_DOCK"/>
    <property type="match status" value="1"/>
</dbReference>
<dbReference type="SMART" id="SM00326">
    <property type="entry name" value="SH3"/>
    <property type="match status" value="1"/>
</dbReference>
<dbReference type="SUPFAM" id="SSF48371">
    <property type="entry name" value="ARM repeat"/>
    <property type="match status" value="1"/>
</dbReference>
<dbReference type="SUPFAM" id="SSF50044">
    <property type="entry name" value="SH3-domain"/>
    <property type="match status" value="1"/>
</dbReference>
<dbReference type="PROSITE" id="PS51650">
    <property type="entry name" value="C2_DOCK"/>
    <property type="match status" value="1"/>
</dbReference>
<dbReference type="PROSITE" id="PS51651">
    <property type="entry name" value="DOCKER"/>
    <property type="match status" value="1"/>
</dbReference>
<dbReference type="PROSITE" id="PS50002">
    <property type="entry name" value="SH3"/>
    <property type="match status" value="1"/>
</dbReference>
<proteinExistence type="evidence at protein level"/>
<evidence type="ECO:0000250" key="1"/>
<evidence type="ECO:0000250" key="2">
    <source>
        <dbReference type="UniProtKB" id="Q92608"/>
    </source>
</evidence>
<evidence type="ECO:0000255" key="3">
    <source>
        <dbReference type="PROSITE-ProRule" id="PRU00192"/>
    </source>
</evidence>
<evidence type="ECO:0000255" key="4">
    <source>
        <dbReference type="PROSITE-ProRule" id="PRU00983"/>
    </source>
</evidence>
<evidence type="ECO:0000255" key="5">
    <source>
        <dbReference type="PROSITE-ProRule" id="PRU00984"/>
    </source>
</evidence>
<evidence type="ECO:0000256" key="6">
    <source>
        <dbReference type="SAM" id="MobiDB-lite"/>
    </source>
</evidence>
<evidence type="ECO:0000269" key="7">
    <source>
    </source>
</evidence>
<evidence type="ECO:0000305" key="8"/>
<evidence type="ECO:0007744" key="9">
    <source>
    </source>
</evidence>
<gene>
    <name type="primary">Dock2</name>
</gene>